<organism>
    <name type="scientific">Salmonella paratyphi A (strain AKU_12601)</name>
    <dbReference type="NCBI Taxonomy" id="554290"/>
    <lineage>
        <taxon>Bacteria</taxon>
        <taxon>Pseudomonadati</taxon>
        <taxon>Pseudomonadota</taxon>
        <taxon>Gammaproteobacteria</taxon>
        <taxon>Enterobacterales</taxon>
        <taxon>Enterobacteriaceae</taxon>
        <taxon>Salmonella</taxon>
    </lineage>
</organism>
<feature type="chain" id="PRO_1000138027" description="N-succinylarginine dihydrolase">
    <location>
        <begin position="1"/>
        <end position="447"/>
    </location>
</feature>
<feature type="active site" evidence="1">
    <location>
        <position position="174"/>
    </location>
</feature>
<feature type="active site" evidence="1">
    <location>
        <position position="248"/>
    </location>
</feature>
<feature type="active site" description="Nucleophile" evidence="1">
    <location>
        <position position="365"/>
    </location>
</feature>
<feature type="binding site" evidence="1">
    <location>
        <begin position="19"/>
        <end position="28"/>
    </location>
    <ligand>
        <name>substrate</name>
    </ligand>
</feature>
<feature type="binding site" evidence="1">
    <location>
        <position position="110"/>
    </location>
    <ligand>
        <name>substrate</name>
    </ligand>
</feature>
<feature type="binding site" evidence="1">
    <location>
        <begin position="137"/>
        <end position="138"/>
    </location>
    <ligand>
        <name>substrate</name>
    </ligand>
</feature>
<feature type="binding site" evidence="1">
    <location>
        <position position="212"/>
    </location>
    <ligand>
        <name>substrate</name>
    </ligand>
</feature>
<feature type="binding site" evidence="1">
    <location>
        <position position="250"/>
    </location>
    <ligand>
        <name>substrate</name>
    </ligand>
</feature>
<feature type="binding site" evidence="1">
    <location>
        <position position="359"/>
    </location>
    <ligand>
        <name>substrate</name>
    </ligand>
</feature>
<accession>B5BA69</accession>
<gene>
    <name evidence="1" type="primary">astB</name>
    <name type="ordered locus">SSPA1429</name>
</gene>
<sequence length="447" mass="49135">MTAHEVNFDGLVGLTHHYAGLSFGNEASTRHRFQVSNPRLAVKQGLLKMKALADAGFPQAVIPPHERPFIPALRQLGFTGSDEQILDKVARQAPRWLSSVSSASPMWVANAATVCPSADALDGKVHLTVANLNNKFHRALEAPVTEALLRAIFRDESQFSVHSALPQVALLGDEGAANHNRLGGEYGSAGVQLFVYGREEENEIRPARYPARQSREASEAVARLNQVNPQQVIFAQQNPEVIDQGVFHNDVIAVSNRQVLFCHEAAFARQKVLINQLRTRVDGFMAIEVPAGEVSVSDAVAPYLFNSQLLSRDDGSMLLVLPRECQDHAGVWRYLNKLVAEDNPISAMQVFDLRESMANGGGPACLRLRVVLTEEERRAVNPAVMMNDALFTALNAWADRYYRDRLTAADLADPLLLREGREALDVLTRLLDLGSVYPFQQTGAADG</sequence>
<dbReference type="EC" id="3.5.3.23" evidence="1"/>
<dbReference type="EMBL" id="FM200053">
    <property type="protein sequence ID" value="CAR59608.1"/>
    <property type="molecule type" value="Genomic_DNA"/>
</dbReference>
<dbReference type="RefSeq" id="WP_000123946.1">
    <property type="nucleotide sequence ID" value="NC_011147.1"/>
</dbReference>
<dbReference type="SMR" id="B5BA69"/>
<dbReference type="KEGG" id="sek:SSPA1429"/>
<dbReference type="HOGENOM" id="CLU_053835_0_0_6"/>
<dbReference type="UniPathway" id="UPA00185">
    <property type="reaction ID" value="UER00280"/>
</dbReference>
<dbReference type="Proteomes" id="UP000001869">
    <property type="component" value="Chromosome"/>
</dbReference>
<dbReference type="GO" id="GO:0009015">
    <property type="term" value="F:N-succinylarginine dihydrolase activity"/>
    <property type="evidence" value="ECO:0007669"/>
    <property type="project" value="UniProtKB-UniRule"/>
</dbReference>
<dbReference type="GO" id="GO:0019544">
    <property type="term" value="P:arginine catabolic process to glutamate"/>
    <property type="evidence" value="ECO:0007669"/>
    <property type="project" value="UniProtKB-UniRule"/>
</dbReference>
<dbReference type="GO" id="GO:0019545">
    <property type="term" value="P:arginine catabolic process to succinate"/>
    <property type="evidence" value="ECO:0007669"/>
    <property type="project" value="UniProtKB-UniRule"/>
</dbReference>
<dbReference type="FunFam" id="3.75.10.20:FF:000001">
    <property type="entry name" value="N-succinylarginine dihydrolase"/>
    <property type="match status" value="1"/>
</dbReference>
<dbReference type="Gene3D" id="3.75.10.20">
    <property type="entry name" value="Succinylarginine dihydrolase"/>
    <property type="match status" value="1"/>
</dbReference>
<dbReference type="HAMAP" id="MF_01172">
    <property type="entry name" value="AstB"/>
    <property type="match status" value="1"/>
</dbReference>
<dbReference type="InterPro" id="IPR037031">
    <property type="entry name" value="AstB_sf"/>
</dbReference>
<dbReference type="InterPro" id="IPR007079">
    <property type="entry name" value="SuccinylArg_d-Hdrlase_AstB"/>
</dbReference>
<dbReference type="NCBIfam" id="TIGR03241">
    <property type="entry name" value="arg_catab_astB"/>
    <property type="match status" value="1"/>
</dbReference>
<dbReference type="NCBIfam" id="NF009789">
    <property type="entry name" value="PRK13281.1"/>
    <property type="match status" value="1"/>
</dbReference>
<dbReference type="PANTHER" id="PTHR30420">
    <property type="entry name" value="N-SUCCINYLARGININE DIHYDROLASE"/>
    <property type="match status" value="1"/>
</dbReference>
<dbReference type="PANTHER" id="PTHR30420:SF2">
    <property type="entry name" value="N-SUCCINYLARGININE DIHYDROLASE"/>
    <property type="match status" value="1"/>
</dbReference>
<dbReference type="Pfam" id="PF04996">
    <property type="entry name" value="AstB"/>
    <property type="match status" value="1"/>
</dbReference>
<dbReference type="SUPFAM" id="SSF55909">
    <property type="entry name" value="Pentein"/>
    <property type="match status" value="1"/>
</dbReference>
<evidence type="ECO:0000255" key="1">
    <source>
        <dbReference type="HAMAP-Rule" id="MF_01172"/>
    </source>
</evidence>
<name>ASTB_SALPK</name>
<protein>
    <recommendedName>
        <fullName evidence="1">N-succinylarginine dihydrolase</fullName>
        <ecNumber evidence="1">3.5.3.23</ecNumber>
    </recommendedName>
</protein>
<keyword id="KW-0056">Arginine metabolism</keyword>
<keyword id="KW-0378">Hydrolase</keyword>
<comment type="function">
    <text evidence="1">Catalyzes the hydrolysis of N(2)-succinylarginine into N(2)-succinylornithine, ammonia and CO(2).</text>
</comment>
<comment type="catalytic activity">
    <reaction evidence="1">
        <text>N(2)-succinyl-L-arginine + 2 H2O + 2 H(+) = N(2)-succinyl-L-ornithine + 2 NH4(+) + CO2</text>
        <dbReference type="Rhea" id="RHEA:19533"/>
        <dbReference type="ChEBI" id="CHEBI:15377"/>
        <dbReference type="ChEBI" id="CHEBI:15378"/>
        <dbReference type="ChEBI" id="CHEBI:16526"/>
        <dbReference type="ChEBI" id="CHEBI:28938"/>
        <dbReference type="ChEBI" id="CHEBI:58241"/>
        <dbReference type="ChEBI" id="CHEBI:58514"/>
        <dbReference type="EC" id="3.5.3.23"/>
    </reaction>
</comment>
<comment type="pathway">
    <text evidence="1">Amino-acid degradation; L-arginine degradation via AST pathway; L-glutamate and succinate from L-arginine: step 2/5.</text>
</comment>
<comment type="subunit">
    <text evidence="1">Homodimer.</text>
</comment>
<comment type="similarity">
    <text evidence="1">Belongs to the succinylarginine dihydrolase family.</text>
</comment>
<proteinExistence type="inferred from homology"/>
<reference key="1">
    <citation type="journal article" date="2009" name="BMC Genomics">
        <title>Pseudogene accumulation in the evolutionary histories of Salmonella enterica serovars Paratyphi A and Typhi.</title>
        <authorList>
            <person name="Holt K.E."/>
            <person name="Thomson N.R."/>
            <person name="Wain J."/>
            <person name="Langridge G.C."/>
            <person name="Hasan R."/>
            <person name="Bhutta Z.A."/>
            <person name="Quail M.A."/>
            <person name="Norbertczak H."/>
            <person name="Walker D."/>
            <person name="Simmonds M."/>
            <person name="White B."/>
            <person name="Bason N."/>
            <person name="Mungall K."/>
            <person name="Dougan G."/>
            <person name="Parkhill J."/>
        </authorList>
    </citation>
    <scope>NUCLEOTIDE SEQUENCE [LARGE SCALE GENOMIC DNA]</scope>
    <source>
        <strain>AKU_12601</strain>
    </source>
</reference>